<sequence>MMAKLMITVMMVLLLSLQQGADGRSERWRKNQMAASRIMRNLITARGDPPRFCVHKICYEDSECNQWCTGGCNPTQGKCDTA</sequence>
<reference key="1">
    <citation type="journal article" date="2008" name="Toxicon">
        <title>A rapidly diverging superfamily of peptide toxins in venomous Gemmula species.</title>
        <authorList>
            <person name="Heralde F.M. III"/>
            <person name="Imperial J."/>
            <person name="Bandyopadhyay P.K."/>
            <person name="Olivera B.M."/>
            <person name="Concepcion G.P."/>
            <person name="Santos A.D."/>
        </authorList>
    </citation>
    <scope>NUCLEOTIDE SEQUENCE [MRNA]</scope>
    <source>
        <tissue>Venom duct</tissue>
    </source>
</reference>
<feature type="signal peptide" evidence="2">
    <location>
        <begin position="1"/>
        <end position="23"/>
    </location>
</feature>
<feature type="propeptide" id="PRO_0000346146" evidence="1">
    <location>
        <begin position="24"/>
        <end position="46"/>
    </location>
</feature>
<feature type="peptide" id="PRO_0000346147" description="Turripeptide Gdm9.1">
    <location>
        <begin position="47"/>
        <end position="82"/>
    </location>
</feature>
<feature type="modified residue" description="4-hydroxyproline" evidence="1">
    <location>
        <position position="49"/>
    </location>
</feature>
<feature type="modified residue" description="4-hydroxyproline" evidence="1">
    <location>
        <position position="50"/>
    </location>
</feature>
<feature type="modified residue" description="4-carboxyglutamate" evidence="1">
    <location>
        <position position="60"/>
    </location>
</feature>
<feature type="modified residue" description="4-carboxyglutamate" evidence="1">
    <location>
        <position position="63"/>
    </location>
</feature>
<feature type="disulfide bond" evidence="1">
    <location>
        <begin position="53"/>
        <end position="68"/>
    </location>
</feature>
<feature type="disulfide bond" evidence="1">
    <location>
        <begin position="58"/>
        <end position="72"/>
    </location>
</feature>
<feature type="disulfide bond" evidence="1">
    <location>
        <begin position="64"/>
        <end position="79"/>
    </location>
</feature>
<accession>P0C847</accession>
<comment type="subcellular location">
    <subcellularLocation>
        <location evidence="5">Secreted</location>
    </subcellularLocation>
</comment>
<comment type="tissue specificity">
    <text evidence="5">Expressed by the venom duct.</text>
</comment>
<comment type="domain">
    <text evidence="4">The cysteine framework is IX (C-C-C-C-C-C).</text>
</comment>
<comment type="similarity">
    <text evidence="4">Belongs to the Pg turripeptide superfamily.</text>
</comment>
<name>C91_GEMDI</name>
<dbReference type="GO" id="GO:0005576">
    <property type="term" value="C:extracellular region"/>
    <property type="evidence" value="ECO:0007669"/>
    <property type="project" value="UniProtKB-SubCell"/>
</dbReference>
<dbReference type="GO" id="GO:0090729">
    <property type="term" value="F:toxin activity"/>
    <property type="evidence" value="ECO:0007669"/>
    <property type="project" value="UniProtKB-KW"/>
</dbReference>
<dbReference type="InterPro" id="IPR026210">
    <property type="entry name" value="Toxin_Pg"/>
</dbReference>
<dbReference type="PRINTS" id="PR02080">
    <property type="entry name" value="TOXINPGFAMLY"/>
</dbReference>
<proteinExistence type="inferred from homology"/>
<organism>
    <name type="scientific">Gemmula diomedea</name>
    <name type="common">Gem-turris</name>
    <dbReference type="NCBI Taxonomy" id="439588"/>
    <lineage>
        <taxon>Eukaryota</taxon>
        <taxon>Metazoa</taxon>
        <taxon>Spiralia</taxon>
        <taxon>Lophotrochozoa</taxon>
        <taxon>Mollusca</taxon>
        <taxon>Gastropoda</taxon>
        <taxon>Caenogastropoda</taxon>
        <taxon>Neogastropoda</taxon>
        <taxon>Conoidea</taxon>
        <taxon>Turridae</taxon>
        <taxon>Gemmula</taxon>
    </lineage>
</organism>
<evidence type="ECO:0000250" key="1"/>
<evidence type="ECO:0000255" key="2"/>
<evidence type="ECO:0000303" key="3">
    <source>
    </source>
</evidence>
<evidence type="ECO:0000305" key="4"/>
<evidence type="ECO:0000305" key="5">
    <source>
    </source>
</evidence>
<protein>
    <recommendedName>
        <fullName evidence="3">Turripeptide Gdm9.1</fullName>
    </recommendedName>
</protein>
<keyword id="KW-1015">Disulfide bond</keyword>
<keyword id="KW-0301">Gamma-carboxyglutamic acid</keyword>
<keyword id="KW-0379">Hydroxylation</keyword>
<keyword id="KW-0964">Secreted</keyword>
<keyword id="KW-0732">Signal</keyword>
<keyword id="KW-0800">Toxin</keyword>